<proteinExistence type="inferred from homology"/>
<accession>C1L299</accession>
<organism>
    <name type="scientific">Listeria monocytogenes serotype 4b (strain CLIP80459)</name>
    <dbReference type="NCBI Taxonomy" id="568819"/>
    <lineage>
        <taxon>Bacteria</taxon>
        <taxon>Bacillati</taxon>
        <taxon>Bacillota</taxon>
        <taxon>Bacilli</taxon>
        <taxon>Bacillales</taxon>
        <taxon>Listeriaceae</taxon>
        <taxon>Listeria</taxon>
    </lineage>
</organism>
<name>CBID_LISMC</name>
<gene>
    <name evidence="1" type="primary">cbiD</name>
    <name type="ordered locus">Lm4b_01198</name>
</gene>
<protein>
    <recommendedName>
        <fullName evidence="1">Cobalt-precorrin-5B C(1)-methyltransferase</fullName>
        <ecNumber evidence="1">2.1.1.195</ecNumber>
    </recommendedName>
    <alternativeName>
        <fullName evidence="1">Cobalt-precorrin-6A synthase</fullName>
    </alternativeName>
</protein>
<sequence>MEDFIYYNGKKYRKGYTTGTCAAAAAKACVEMILTQEEVSAVQVTTTGGTILEIPVAYQKFSKDKATAAVQKDGGDDIDATHGMWIFVDVDLTDNAEVVLDGGVGIGRATQKGISVAVGEAAINPAPRKNILATVRESLGENRGAKILVYAPEGEERAKRTMNSNLGIIGGISILGTTGIVTPMSDEGWKKSLSMELEMKRNQGLDQIILVPGNYGDDFVQNTLGFSSGNIVSMSNFVGYMLKETQRLAFKKVLMVGHFGKLVKVSAGIFTTYSKDADARAEILVANLALLGAPLSLLQAVEKCNTTEAAGELIEEAGFTQVYDVIVQKIKARSERFLKFTKPSVEVDVVTFSTERGLLAATKDIDVLREEWR</sequence>
<evidence type="ECO:0000255" key="1">
    <source>
        <dbReference type="HAMAP-Rule" id="MF_00787"/>
    </source>
</evidence>
<keyword id="KW-0169">Cobalamin biosynthesis</keyword>
<keyword id="KW-0489">Methyltransferase</keyword>
<keyword id="KW-0949">S-adenosyl-L-methionine</keyword>
<keyword id="KW-0808">Transferase</keyword>
<feature type="chain" id="PRO_1000212939" description="Cobalt-precorrin-5B C(1)-methyltransferase">
    <location>
        <begin position="1"/>
        <end position="373"/>
    </location>
</feature>
<dbReference type="EC" id="2.1.1.195" evidence="1"/>
<dbReference type="EMBL" id="FM242711">
    <property type="protein sequence ID" value="CAS04965.1"/>
    <property type="molecule type" value="Genomic_DNA"/>
</dbReference>
<dbReference type="RefSeq" id="WP_003724728.1">
    <property type="nucleotide sequence ID" value="NC_012488.1"/>
</dbReference>
<dbReference type="SMR" id="C1L299"/>
<dbReference type="KEGG" id="lmc:Lm4b_01198"/>
<dbReference type="HOGENOM" id="CLU_041273_1_0_9"/>
<dbReference type="UniPathway" id="UPA00148">
    <property type="reaction ID" value="UER00227"/>
</dbReference>
<dbReference type="GO" id="GO:0043780">
    <property type="term" value="F:cobalt-precorrin-5B C1-methyltransferase activity"/>
    <property type="evidence" value="ECO:0007669"/>
    <property type="project" value="RHEA"/>
</dbReference>
<dbReference type="GO" id="GO:0019251">
    <property type="term" value="P:anaerobic cobalamin biosynthetic process"/>
    <property type="evidence" value="ECO:0007669"/>
    <property type="project" value="UniProtKB-UniRule"/>
</dbReference>
<dbReference type="GO" id="GO:0032259">
    <property type="term" value="P:methylation"/>
    <property type="evidence" value="ECO:0007669"/>
    <property type="project" value="UniProtKB-KW"/>
</dbReference>
<dbReference type="Gene3D" id="3.30.2110.10">
    <property type="entry name" value="CbiD-like"/>
    <property type="match status" value="1"/>
</dbReference>
<dbReference type="HAMAP" id="MF_00787">
    <property type="entry name" value="CbiD"/>
    <property type="match status" value="1"/>
</dbReference>
<dbReference type="InterPro" id="IPR002748">
    <property type="entry name" value="CbiD"/>
</dbReference>
<dbReference type="InterPro" id="IPR036074">
    <property type="entry name" value="CbiD_sf"/>
</dbReference>
<dbReference type="NCBIfam" id="TIGR00312">
    <property type="entry name" value="cbiD"/>
    <property type="match status" value="1"/>
</dbReference>
<dbReference type="PANTHER" id="PTHR35863">
    <property type="entry name" value="COBALT-PRECORRIN-5B C(1)-METHYLTRANSFERASE"/>
    <property type="match status" value="1"/>
</dbReference>
<dbReference type="PANTHER" id="PTHR35863:SF1">
    <property type="entry name" value="COBALT-PRECORRIN-5B C(1)-METHYLTRANSFERASE"/>
    <property type="match status" value="1"/>
</dbReference>
<dbReference type="Pfam" id="PF01888">
    <property type="entry name" value="CbiD"/>
    <property type="match status" value="1"/>
</dbReference>
<dbReference type="PIRSF" id="PIRSF026782">
    <property type="entry name" value="CbiD"/>
    <property type="match status" value="1"/>
</dbReference>
<dbReference type="SUPFAM" id="SSF111342">
    <property type="entry name" value="CbiD-like"/>
    <property type="match status" value="1"/>
</dbReference>
<reference key="1">
    <citation type="journal article" date="2012" name="BMC Genomics">
        <title>Comparative genomics and transcriptomics of lineages I, II, and III strains of Listeria monocytogenes.</title>
        <authorList>
            <person name="Hain T."/>
            <person name="Ghai R."/>
            <person name="Billion A."/>
            <person name="Kuenne C.T."/>
            <person name="Steinweg C."/>
            <person name="Izar B."/>
            <person name="Mohamed W."/>
            <person name="Mraheil M."/>
            <person name="Domann E."/>
            <person name="Schaffrath S."/>
            <person name="Karst U."/>
            <person name="Goesmann A."/>
            <person name="Oehm S."/>
            <person name="Puhler A."/>
            <person name="Merkl R."/>
            <person name="Vorwerk S."/>
            <person name="Glaser P."/>
            <person name="Garrido P."/>
            <person name="Rusniok C."/>
            <person name="Buchrieser C."/>
            <person name="Goebel W."/>
            <person name="Chakraborty T."/>
        </authorList>
    </citation>
    <scope>NUCLEOTIDE SEQUENCE [LARGE SCALE GENOMIC DNA]</scope>
    <source>
        <strain>CLIP80459</strain>
    </source>
</reference>
<comment type="function">
    <text evidence="1">Catalyzes the methylation of C-1 in cobalt-precorrin-5B to form cobalt-precorrin-6A.</text>
</comment>
<comment type="catalytic activity">
    <reaction evidence="1">
        <text>Co-precorrin-5B + S-adenosyl-L-methionine = Co-precorrin-6A + S-adenosyl-L-homocysteine</text>
        <dbReference type="Rhea" id="RHEA:26285"/>
        <dbReference type="ChEBI" id="CHEBI:57856"/>
        <dbReference type="ChEBI" id="CHEBI:59789"/>
        <dbReference type="ChEBI" id="CHEBI:60063"/>
        <dbReference type="ChEBI" id="CHEBI:60064"/>
        <dbReference type="EC" id="2.1.1.195"/>
    </reaction>
</comment>
<comment type="pathway">
    <text evidence="1">Cofactor biosynthesis; adenosylcobalamin biosynthesis; cob(II)yrinate a,c-diamide from sirohydrochlorin (anaerobic route): step 6/10.</text>
</comment>
<comment type="similarity">
    <text evidence="1">Belongs to the CbiD family.</text>
</comment>